<gene>
    <name type="primary">rpoE</name>
    <name type="ordered locus">HI_0628</name>
</gene>
<proteinExistence type="inferred from homology"/>
<accession>P44790</accession>
<reference key="1">
    <citation type="journal article" date="1995" name="Science">
        <title>Whole-genome random sequencing and assembly of Haemophilus influenzae Rd.</title>
        <authorList>
            <person name="Fleischmann R.D."/>
            <person name="Adams M.D."/>
            <person name="White O."/>
            <person name="Clayton R.A."/>
            <person name="Kirkness E.F."/>
            <person name="Kerlavage A.R."/>
            <person name="Bult C.J."/>
            <person name="Tomb J.-F."/>
            <person name="Dougherty B.A."/>
            <person name="Merrick J.M."/>
            <person name="McKenney K."/>
            <person name="Sutton G.G."/>
            <person name="FitzHugh W."/>
            <person name="Fields C.A."/>
            <person name="Gocayne J.D."/>
            <person name="Scott J.D."/>
            <person name="Shirley R."/>
            <person name="Liu L.-I."/>
            <person name="Glodek A."/>
            <person name="Kelley J.M."/>
            <person name="Weidman J.F."/>
            <person name="Phillips C.A."/>
            <person name="Spriggs T."/>
            <person name="Hedblom E."/>
            <person name="Cotton M.D."/>
            <person name="Utterback T.R."/>
            <person name="Hanna M.C."/>
            <person name="Nguyen D.T."/>
            <person name="Saudek D.M."/>
            <person name="Brandon R.C."/>
            <person name="Fine L.D."/>
            <person name="Fritchman J.L."/>
            <person name="Fuhrmann J.L."/>
            <person name="Geoghagen N.S.M."/>
            <person name="Gnehm C.L."/>
            <person name="McDonald L.A."/>
            <person name="Small K.V."/>
            <person name="Fraser C.M."/>
            <person name="Smith H.O."/>
            <person name="Venter J.C."/>
        </authorList>
    </citation>
    <scope>NUCLEOTIDE SEQUENCE [LARGE SCALE GENOMIC DNA]</scope>
    <source>
        <strain>ATCC 51907 / DSM 11121 / KW20 / Rd</strain>
    </source>
</reference>
<sequence>MAEQLTDQALVERVQQGDKKAFNLLVSRYQNKVAGLLTRYVSRNDIPDVVQESFIKAYRSIESFRGESAFYTWLYRIAVNTAKNYLTAQGRRPPNEDILAEDAENYDVGTHLRDVDTPENEMLSSELERIVFDTIHNLPEDLKTAITLRELEGLSYEDIAEIMDCPVGTVRSRIFRAREMIENKIQPLM</sequence>
<dbReference type="EMBL" id="L42023">
    <property type="protein sequence ID" value="AAC22288.1"/>
    <property type="molecule type" value="Genomic_DNA"/>
</dbReference>
<dbReference type="PIR" id="F64082">
    <property type="entry name" value="F64082"/>
</dbReference>
<dbReference type="RefSeq" id="NP_438788.1">
    <property type="nucleotide sequence ID" value="NC_000907.1"/>
</dbReference>
<dbReference type="SMR" id="P44790"/>
<dbReference type="STRING" id="71421.HI_0628"/>
<dbReference type="EnsemblBacteria" id="AAC22288">
    <property type="protein sequence ID" value="AAC22288"/>
    <property type="gene ID" value="HI_0628"/>
</dbReference>
<dbReference type="KEGG" id="hin:HI_0628"/>
<dbReference type="PATRIC" id="fig|71421.8.peg.654"/>
<dbReference type="eggNOG" id="COG1595">
    <property type="taxonomic scope" value="Bacteria"/>
</dbReference>
<dbReference type="HOGENOM" id="CLU_047691_3_0_6"/>
<dbReference type="OrthoDB" id="9780326at2"/>
<dbReference type="PhylomeDB" id="P44790"/>
<dbReference type="BioCyc" id="HINF71421:G1GJ1-655-MONOMER"/>
<dbReference type="Proteomes" id="UP000000579">
    <property type="component" value="Chromosome"/>
</dbReference>
<dbReference type="GO" id="GO:0005737">
    <property type="term" value="C:cytoplasm"/>
    <property type="evidence" value="ECO:0007669"/>
    <property type="project" value="UniProtKB-SubCell"/>
</dbReference>
<dbReference type="GO" id="GO:0003677">
    <property type="term" value="F:DNA binding"/>
    <property type="evidence" value="ECO:0007669"/>
    <property type="project" value="UniProtKB-KW"/>
</dbReference>
<dbReference type="GO" id="GO:0016987">
    <property type="term" value="F:sigma factor activity"/>
    <property type="evidence" value="ECO:0000318"/>
    <property type="project" value="GO_Central"/>
</dbReference>
<dbReference type="GO" id="GO:0006352">
    <property type="term" value="P:DNA-templated transcription initiation"/>
    <property type="evidence" value="ECO:0007669"/>
    <property type="project" value="InterPro"/>
</dbReference>
<dbReference type="GO" id="GO:0006355">
    <property type="term" value="P:regulation of DNA-templated transcription"/>
    <property type="evidence" value="ECO:0000318"/>
    <property type="project" value="GO_Central"/>
</dbReference>
<dbReference type="CDD" id="cd06171">
    <property type="entry name" value="Sigma70_r4"/>
    <property type="match status" value="1"/>
</dbReference>
<dbReference type="FunFam" id="1.10.1740.10:FF:000001">
    <property type="entry name" value="RNA polymerase sigma factor"/>
    <property type="match status" value="1"/>
</dbReference>
<dbReference type="Gene3D" id="1.10.1740.10">
    <property type="match status" value="1"/>
</dbReference>
<dbReference type="Gene3D" id="1.10.10.10">
    <property type="entry name" value="Winged helix-like DNA-binding domain superfamily/Winged helix DNA-binding domain"/>
    <property type="match status" value="1"/>
</dbReference>
<dbReference type="InterPro" id="IPR039425">
    <property type="entry name" value="RNA_pol_sigma-70-like"/>
</dbReference>
<dbReference type="InterPro" id="IPR014284">
    <property type="entry name" value="RNA_pol_sigma-70_dom"/>
</dbReference>
<dbReference type="InterPro" id="IPR000838">
    <property type="entry name" value="RNA_pol_sigma70_ECF_CS"/>
</dbReference>
<dbReference type="InterPro" id="IPR007627">
    <property type="entry name" value="RNA_pol_sigma70_r2"/>
</dbReference>
<dbReference type="InterPro" id="IPR013249">
    <property type="entry name" value="RNA_pol_sigma70_r4_t2"/>
</dbReference>
<dbReference type="InterPro" id="IPR014286">
    <property type="entry name" value="RNA_pol_sigma70_RpoE"/>
</dbReference>
<dbReference type="InterPro" id="IPR013325">
    <property type="entry name" value="RNA_pol_sigma_r2"/>
</dbReference>
<dbReference type="InterPro" id="IPR013324">
    <property type="entry name" value="RNA_pol_sigma_r3/r4-like"/>
</dbReference>
<dbReference type="InterPro" id="IPR036388">
    <property type="entry name" value="WH-like_DNA-bd_sf"/>
</dbReference>
<dbReference type="NCBIfam" id="TIGR02939">
    <property type="entry name" value="RpoE_Sigma70"/>
    <property type="match status" value="1"/>
</dbReference>
<dbReference type="NCBIfam" id="TIGR02937">
    <property type="entry name" value="sigma70-ECF"/>
    <property type="match status" value="1"/>
</dbReference>
<dbReference type="PANTHER" id="PTHR43133:SF53">
    <property type="entry name" value="ECF RNA POLYMERASE SIGMA-E FACTOR"/>
    <property type="match status" value="1"/>
</dbReference>
<dbReference type="PANTHER" id="PTHR43133">
    <property type="entry name" value="RNA POLYMERASE ECF-TYPE SIGMA FACTO"/>
    <property type="match status" value="1"/>
</dbReference>
<dbReference type="Pfam" id="PF04542">
    <property type="entry name" value="Sigma70_r2"/>
    <property type="match status" value="1"/>
</dbReference>
<dbReference type="Pfam" id="PF08281">
    <property type="entry name" value="Sigma70_r4_2"/>
    <property type="match status" value="1"/>
</dbReference>
<dbReference type="SUPFAM" id="SSF88946">
    <property type="entry name" value="Sigma2 domain of RNA polymerase sigma factors"/>
    <property type="match status" value="1"/>
</dbReference>
<dbReference type="SUPFAM" id="SSF88659">
    <property type="entry name" value="Sigma3 and sigma4 domains of RNA polymerase sigma factors"/>
    <property type="match status" value="1"/>
</dbReference>
<dbReference type="PROSITE" id="PS01063">
    <property type="entry name" value="SIGMA70_ECF"/>
    <property type="match status" value="1"/>
</dbReference>
<name>RPOE_HAEIN</name>
<feature type="chain" id="PRO_0000094003" description="ECF RNA polymerase sigma-E factor">
    <location>
        <begin position="1"/>
        <end position="189"/>
    </location>
</feature>
<feature type="DNA-binding region" description="H-T-H motif" evidence="1">
    <location>
        <begin position="156"/>
        <end position="175"/>
    </location>
</feature>
<feature type="region of interest" description="Binds RNAP core" evidence="1">
    <location>
        <begin position="1"/>
        <end position="153"/>
    </location>
</feature>
<feature type="region of interest" description="Sigma-70 factor domain-2" evidence="1">
    <location>
        <begin position="25"/>
        <end position="92"/>
    </location>
</feature>
<feature type="region of interest" description="Sigma-70 factor domain-4" evidence="1">
    <location>
        <begin position="129"/>
        <end position="180"/>
    </location>
</feature>
<feature type="short sequence motif" description="Polymerase core binding" evidence="1">
    <location>
        <begin position="48"/>
        <end position="61"/>
    </location>
</feature>
<organism>
    <name type="scientific">Haemophilus influenzae (strain ATCC 51907 / DSM 11121 / KW20 / Rd)</name>
    <dbReference type="NCBI Taxonomy" id="71421"/>
    <lineage>
        <taxon>Bacteria</taxon>
        <taxon>Pseudomonadati</taxon>
        <taxon>Pseudomonadota</taxon>
        <taxon>Gammaproteobacteria</taxon>
        <taxon>Pasteurellales</taxon>
        <taxon>Pasteurellaceae</taxon>
        <taxon>Haemophilus</taxon>
    </lineage>
</organism>
<comment type="function">
    <text evidence="1">Sigma factors are initiation factors that promote the attachment of RNA polymerase (RNAP) to specific initiation sites and are then released. Extracytoplasmic function (ECF) sigma-E controls the envelope stress response, responding to periplasmic protein stress, increased levels of periplasmic lipopolysaccharide (LPS) as well as heat shock and oxidative stress; it controls protein processing in the extracytoplasmic compartment (By similarity).</text>
</comment>
<comment type="activity regulation">
    <text evidence="1">ECF sigma-E is held in an inactive form by its cognate anti-sigma factor (RseA) until released by regulated intramembrane proteolysis (RIP). RIP occurs when an extracytoplasmic signal (periplasmic stress and excess LPS) triggers a concerted proteolytic cascade to transmit information and elicit cellular responses. The anti-sigma factor RseA is an inner membrane protein, binding sigma-E in the cytoplasm and RseB in the periplasm. RseA is first cut extracytoplasmically (site-1 protease, S1P, by DegS), then within the membrane itself (site-2 protease, S2P, by RseP), while cytoplasmic proteases (predominantly ClpX-ClpP) finish degrading the regulatory protein, liberating sigma-E. Degradation of RseA requires 2 signals to activate DegS; an outer membrane protein (OMP) signal activates DegS, while an LPS signal causes release of RseB from RseA, freeing RseA to be cleaved (By similarity).</text>
</comment>
<comment type="subunit">
    <text evidence="1">Interacts transiently with the RNAP catalytic core formed by RpoA, RpoB, RpoC and RpoZ (2 alpha, 1 beta, 1 beta' and 1 omega subunit) to form the RNAP holoenzyme that can initiate transcription. Interacts 1:1 with anti-sigma-E factor RseA which prevents binding to RNAP catalytic core (By similarity).</text>
</comment>
<comment type="subcellular location">
    <subcellularLocation>
        <location evidence="1">Cytoplasm</location>
    </subcellularLocation>
    <text evidence="1">Associates with the inner membrane via RseA.</text>
</comment>
<comment type="domain">
    <text evidence="1">The sigma-70 factor domain-2 mediates sequence-specific interaction with the -10 element in promoter DNA, and plays an important role in melting the double-stranded DNA and the formation of the transcription bubble. The sigma-70 factor domain-2 mediates interaction with the RNA polymerase subunits RpoB and RpoC (By similarity).</text>
</comment>
<comment type="domain">
    <text evidence="1">The sigma-70 factor domain-4 contains a helix-turn-helix (H-T-H) motif that mediates interaction with the -35 element in promoter DNA. The domain also mediates interaction with the RNA polymerase subunit RpoA. Interactions between sigma-70 factor domain-4 and anti-sigma factors prevents interaction of sigma factors with the RNA polymerase catalytic core (By similarity).</text>
</comment>
<comment type="similarity">
    <text evidence="2">Belongs to the sigma-70 factor family. ECF subfamily.</text>
</comment>
<keyword id="KW-0963">Cytoplasm</keyword>
<keyword id="KW-0238">DNA-binding</keyword>
<keyword id="KW-1185">Reference proteome</keyword>
<keyword id="KW-0731">Sigma factor</keyword>
<keyword id="KW-0346">Stress response</keyword>
<keyword id="KW-0804">Transcription</keyword>
<keyword id="KW-0805">Transcription regulation</keyword>
<protein>
    <recommendedName>
        <fullName>ECF RNA polymerase sigma-E factor</fullName>
    </recommendedName>
    <alternativeName>
        <fullName>RNA polymerase sigma-E factor</fullName>
    </alternativeName>
    <alternativeName>
        <fullName>Sigma-24</fullName>
    </alternativeName>
</protein>
<evidence type="ECO:0000250" key="1"/>
<evidence type="ECO:0000305" key="2"/>